<protein>
    <recommendedName>
        <fullName evidence="2">NADH dehydrogenase [ubiquinone] flavoprotein 2, mitochondrial</fullName>
        <ecNumber evidence="2">7.1.1.2</ecNumber>
    </recommendedName>
    <alternativeName>
        <fullName>NADH-ubiquinone oxidoreductase 24 kDa subunit</fullName>
    </alternativeName>
</protein>
<reference key="1">
    <citation type="journal article" date="2006" name="Gene">
        <title>Adaptive selection of mitochondrial complex I subunits during primate radiation.</title>
        <authorList>
            <person name="Mishmar D."/>
            <person name="Ruiz-Pesini E."/>
            <person name="Mondragon-Palomino M."/>
            <person name="Procaccio V."/>
            <person name="Gaut B."/>
            <person name="Wallace D.C."/>
        </authorList>
    </citation>
    <scope>NUCLEOTIDE SEQUENCE [MRNA]</scope>
</reference>
<keyword id="KW-0001">2Fe-2S</keyword>
<keyword id="KW-0007">Acetylation</keyword>
<keyword id="KW-0249">Electron transport</keyword>
<keyword id="KW-0408">Iron</keyword>
<keyword id="KW-0411">Iron-sulfur</keyword>
<keyword id="KW-0472">Membrane</keyword>
<keyword id="KW-0479">Metal-binding</keyword>
<keyword id="KW-0496">Mitochondrion</keyword>
<keyword id="KW-0999">Mitochondrion inner membrane</keyword>
<keyword id="KW-0520">NAD</keyword>
<keyword id="KW-0560">Oxidoreductase</keyword>
<keyword id="KW-0597">Phosphoprotein</keyword>
<keyword id="KW-1185">Reference proteome</keyword>
<keyword id="KW-0679">Respiratory chain</keyword>
<keyword id="KW-0809">Transit peptide</keyword>
<keyword id="KW-1278">Translocase</keyword>
<keyword id="KW-0813">Transport</keyword>
<keyword id="KW-0830">Ubiquinone</keyword>
<proteinExistence type="evidence at transcript level"/>
<dbReference type="EC" id="7.1.1.2" evidence="2"/>
<dbReference type="EMBL" id="DQ885645">
    <property type="protein sequence ID" value="ABH12154.1"/>
    <property type="molecule type" value="mRNA"/>
</dbReference>
<dbReference type="RefSeq" id="NP_001065254.1">
    <property type="nucleotide sequence ID" value="NM_001071786.1"/>
</dbReference>
<dbReference type="SMR" id="Q0MQI9"/>
<dbReference type="FunCoup" id="Q0MQI9">
    <property type="interactions" value="1655"/>
</dbReference>
<dbReference type="STRING" id="9598.ENSPTRP00000073779"/>
<dbReference type="PaxDb" id="9598-ENSPTRP00000016775"/>
<dbReference type="Ensembl" id="ENSPTRT00000099813.1">
    <property type="protein sequence ID" value="ENSPTRP00000068755.1"/>
    <property type="gene ID" value="ENSPTRG00000009856.6"/>
</dbReference>
<dbReference type="GeneID" id="455295"/>
<dbReference type="KEGG" id="ptr:455295"/>
<dbReference type="CTD" id="4729"/>
<dbReference type="eggNOG" id="KOG3196">
    <property type="taxonomic scope" value="Eukaryota"/>
</dbReference>
<dbReference type="GeneTree" id="ENSGT00390000017580"/>
<dbReference type="HOGENOM" id="CLU_054362_1_0_1"/>
<dbReference type="InParanoid" id="Q0MQI9"/>
<dbReference type="TreeFam" id="TF300004"/>
<dbReference type="Proteomes" id="UP000002277">
    <property type="component" value="Chromosome 18"/>
</dbReference>
<dbReference type="Bgee" id="ENSPTRG00000009856">
    <property type="expression patterns" value="Expressed in heart and 20 other cell types or tissues"/>
</dbReference>
<dbReference type="GO" id="GO:0005743">
    <property type="term" value="C:mitochondrial inner membrane"/>
    <property type="evidence" value="ECO:0000250"/>
    <property type="project" value="UniProtKB"/>
</dbReference>
<dbReference type="GO" id="GO:0045271">
    <property type="term" value="C:respiratory chain complex I"/>
    <property type="evidence" value="ECO:0000250"/>
    <property type="project" value="UniProtKB"/>
</dbReference>
<dbReference type="GO" id="GO:0051537">
    <property type="term" value="F:2 iron, 2 sulfur cluster binding"/>
    <property type="evidence" value="ECO:0007669"/>
    <property type="project" value="UniProtKB-KW"/>
</dbReference>
<dbReference type="GO" id="GO:0046872">
    <property type="term" value="F:metal ion binding"/>
    <property type="evidence" value="ECO:0007669"/>
    <property type="project" value="UniProtKB-KW"/>
</dbReference>
<dbReference type="GO" id="GO:0008137">
    <property type="term" value="F:NADH dehydrogenase (ubiquinone) activity"/>
    <property type="evidence" value="ECO:0000250"/>
    <property type="project" value="UniProtKB"/>
</dbReference>
<dbReference type="GO" id="GO:0006120">
    <property type="term" value="P:mitochondrial electron transport, NADH to ubiquinone"/>
    <property type="evidence" value="ECO:0000250"/>
    <property type="project" value="UniProtKB"/>
</dbReference>
<dbReference type="CDD" id="cd03064">
    <property type="entry name" value="TRX_Fd_NuoE"/>
    <property type="match status" value="1"/>
</dbReference>
<dbReference type="FunFam" id="3.40.30.10:FF:000022">
    <property type="entry name" value="NADH dehydrogenase flavoprotein 2, mitochondrial"/>
    <property type="match status" value="1"/>
</dbReference>
<dbReference type="FunFam" id="1.10.10.1590:FF:000001">
    <property type="entry name" value="NADH-quinone oxidoreductase subunit E"/>
    <property type="match status" value="1"/>
</dbReference>
<dbReference type="Gene3D" id="3.40.30.10">
    <property type="entry name" value="Glutaredoxin"/>
    <property type="match status" value="1"/>
</dbReference>
<dbReference type="Gene3D" id="1.10.10.1590">
    <property type="entry name" value="NADH-quinone oxidoreductase subunit E"/>
    <property type="match status" value="1"/>
</dbReference>
<dbReference type="InterPro" id="IPR002023">
    <property type="entry name" value="NuoE-like"/>
</dbReference>
<dbReference type="InterPro" id="IPR042128">
    <property type="entry name" value="NuoE_dom"/>
</dbReference>
<dbReference type="InterPro" id="IPR041921">
    <property type="entry name" value="NuoE_N"/>
</dbReference>
<dbReference type="InterPro" id="IPR036249">
    <property type="entry name" value="Thioredoxin-like_sf"/>
</dbReference>
<dbReference type="NCBIfam" id="TIGR01958">
    <property type="entry name" value="nuoE_fam"/>
    <property type="match status" value="1"/>
</dbReference>
<dbReference type="NCBIfam" id="NF005722">
    <property type="entry name" value="PRK07539.1-2"/>
    <property type="match status" value="1"/>
</dbReference>
<dbReference type="NCBIfam" id="NF005725">
    <property type="entry name" value="PRK07539.1-5"/>
    <property type="match status" value="1"/>
</dbReference>
<dbReference type="PANTHER" id="PTHR10371:SF3">
    <property type="entry name" value="NADH DEHYDROGENASE [UBIQUINONE] FLAVOPROTEIN 2, MITOCHONDRIAL"/>
    <property type="match status" value="1"/>
</dbReference>
<dbReference type="PANTHER" id="PTHR10371">
    <property type="entry name" value="NADH DEHYDROGENASE UBIQUINONE FLAVOPROTEIN 2, MITOCHONDRIAL"/>
    <property type="match status" value="1"/>
</dbReference>
<dbReference type="Pfam" id="PF01257">
    <property type="entry name" value="2Fe-2S_thioredx"/>
    <property type="match status" value="1"/>
</dbReference>
<dbReference type="PIRSF" id="PIRSF000216">
    <property type="entry name" value="NADH_DH_24kDa"/>
    <property type="match status" value="1"/>
</dbReference>
<dbReference type="SUPFAM" id="SSF52833">
    <property type="entry name" value="Thioredoxin-like"/>
    <property type="match status" value="1"/>
</dbReference>
<dbReference type="PROSITE" id="PS01099">
    <property type="entry name" value="COMPLEX1_24K"/>
    <property type="match status" value="1"/>
</dbReference>
<feature type="transit peptide" description="Mitochondrion" evidence="4">
    <location>
        <begin position="1"/>
        <end position="32"/>
    </location>
</feature>
<feature type="chain" id="PRO_0000251880" description="NADH dehydrogenase [ubiquinone] flavoprotein 2, mitochondrial">
    <location>
        <begin position="33"/>
        <end position="249"/>
    </location>
</feature>
<feature type="region of interest" description="Disordered" evidence="5">
    <location>
        <begin position="213"/>
        <end position="249"/>
    </location>
</feature>
<feature type="binding site" evidence="1">
    <location>
        <position position="135"/>
    </location>
    <ligand>
        <name>[2Fe-2S] cluster</name>
        <dbReference type="ChEBI" id="CHEBI:190135"/>
    </ligand>
</feature>
<feature type="binding site" evidence="1">
    <location>
        <position position="140"/>
    </location>
    <ligand>
        <name>[2Fe-2S] cluster</name>
        <dbReference type="ChEBI" id="CHEBI:190135"/>
    </ligand>
</feature>
<feature type="binding site" evidence="2">
    <location>
        <position position="176"/>
    </location>
    <ligand>
        <name>[2Fe-2S] cluster</name>
        <dbReference type="ChEBI" id="CHEBI:190135"/>
    </ligand>
</feature>
<feature type="binding site" evidence="2">
    <location>
        <position position="180"/>
    </location>
    <ligand>
        <name>[2Fe-2S] cluster</name>
        <dbReference type="ChEBI" id="CHEBI:190135"/>
    </ligand>
</feature>
<feature type="modified residue" description="N6-acetyllysine" evidence="3">
    <location>
        <position position="61"/>
    </location>
</feature>
<feature type="modified residue" description="Phosphotyrosine; by SRC" evidence="2">
    <location>
        <position position="193"/>
    </location>
</feature>
<comment type="function">
    <text evidence="2">Core subunit of the mitochondrial membrane respiratory chain NADH dehydrogenase (Complex I) which catalyzes electron transfer from NADH through the respiratory chain, using ubiquinone as an electron acceptor. Parts of the peripheral arm of the enzyme, where the electrons from NADH are accepted by flavin mononucleotide (FMN) and then passed along a chain of iron-sulfur clusters by electron tunnelling to the final acceptor ubiquinone. Contains one iron-sulfur cluster.</text>
</comment>
<comment type="catalytic activity">
    <reaction evidence="2">
        <text>a ubiquinone + NADH + 5 H(+)(in) = a ubiquinol + NAD(+) + 4 H(+)(out)</text>
        <dbReference type="Rhea" id="RHEA:29091"/>
        <dbReference type="Rhea" id="RHEA-COMP:9565"/>
        <dbReference type="Rhea" id="RHEA-COMP:9566"/>
        <dbReference type="ChEBI" id="CHEBI:15378"/>
        <dbReference type="ChEBI" id="CHEBI:16389"/>
        <dbReference type="ChEBI" id="CHEBI:17976"/>
        <dbReference type="ChEBI" id="CHEBI:57540"/>
        <dbReference type="ChEBI" id="CHEBI:57945"/>
        <dbReference type="EC" id="7.1.1.2"/>
    </reaction>
    <physiologicalReaction direction="left-to-right" evidence="2">
        <dbReference type="Rhea" id="RHEA:29092"/>
    </physiologicalReaction>
</comment>
<comment type="cofactor">
    <cofactor evidence="2">
        <name>[2Fe-2S] cluster</name>
        <dbReference type="ChEBI" id="CHEBI:190135"/>
    </cofactor>
    <text evidence="2">Binds 1 [2Fe-2S] cluster.</text>
</comment>
<comment type="subunit">
    <text evidence="1">Core subunit of respiratory chain NADH dehydrogenase (Complex I) which is composed of 45 different subunits. This is a component of the flavoprotein-sulfur (FP) fragment of the enzyme (By similarity).</text>
</comment>
<comment type="subcellular location">
    <subcellularLocation>
        <location evidence="1">Mitochondrion inner membrane</location>
        <topology evidence="1">Peripheral membrane protein</topology>
        <orientation evidence="1">Matrix side</orientation>
    </subcellularLocation>
</comment>
<comment type="similarity">
    <text evidence="6">Belongs to the complex I 24 kDa subunit family.</text>
</comment>
<organism>
    <name type="scientific">Pan troglodytes</name>
    <name type="common">Chimpanzee</name>
    <dbReference type="NCBI Taxonomy" id="9598"/>
    <lineage>
        <taxon>Eukaryota</taxon>
        <taxon>Metazoa</taxon>
        <taxon>Chordata</taxon>
        <taxon>Craniata</taxon>
        <taxon>Vertebrata</taxon>
        <taxon>Euteleostomi</taxon>
        <taxon>Mammalia</taxon>
        <taxon>Eutheria</taxon>
        <taxon>Euarchontoglires</taxon>
        <taxon>Primates</taxon>
        <taxon>Haplorrhini</taxon>
        <taxon>Catarrhini</taxon>
        <taxon>Hominidae</taxon>
        <taxon>Pan</taxon>
    </lineage>
</organism>
<accession>Q0MQI9</accession>
<gene>
    <name evidence="2" type="primary">NDUFV2</name>
</gene>
<evidence type="ECO:0000250" key="1">
    <source>
        <dbReference type="UniProtKB" id="P04394"/>
    </source>
</evidence>
<evidence type="ECO:0000250" key="2">
    <source>
        <dbReference type="UniProtKB" id="P19404"/>
    </source>
</evidence>
<evidence type="ECO:0000250" key="3">
    <source>
        <dbReference type="UniProtKB" id="Q9D6J6"/>
    </source>
</evidence>
<evidence type="ECO:0000255" key="4"/>
<evidence type="ECO:0000256" key="5">
    <source>
        <dbReference type="SAM" id="MobiDB-lite"/>
    </source>
</evidence>
<evidence type="ECO:0000305" key="6"/>
<sequence length="249" mass="27360">MFFSAALRARAAGLTAHWGRHVRNLHKTAKQNGAGGALFVHRDTPENNPDTPFDFTPENYKRIEAIVKNYPEGHKAAAVLPVLDLAQRQNGWLPISAMNKVAEVLQVPPMRVYEVATFYTMYNRKPVGKYHIQVCTTTPCMLRNSDSILEAIQKKLGIKVGETTPDKLFTLIEVECLGACVNAPMVQINDNYYEDLTAKDIEEIIDELKAGKIPKPGPRSGRFSCEPAGGLTSLTEPPKGPGFGVQAGL</sequence>
<name>NDUV2_PANTR</name>